<name>RCA_CHLRE</name>
<dbReference type="EMBL" id="M62962">
    <property type="protein sequence ID" value="AAA33091.1"/>
    <property type="molecule type" value="mRNA"/>
</dbReference>
<dbReference type="PIR" id="A45507">
    <property type="entry name" value="A45507"/>
</dbReference>
<dbReference type="SMR" id="P23489"/>
<dbReference type="PaxDb" id="3055-EDP04194"/>
<dbReference type="ProMEX" id="P23489"/>
<dbReference type="eggNOG" id="KOG0651">
    <property type="taxonomic scope" value="Eukaryota"/>
</dbReference>
<dbReference type="GO" id="GO:0009570">
    <property type="term" value="C:chloroplast stroma"/>
    <property type="evidence" value="ECO:0007669"/>
    <property type="project" value="UniProtKB-SubCell"/>
</dbReference>
<dbReference type="GO" id="GO:0005524">
    <property type="term" value="F:ATP binding"/>
    <property type="evidence" value="ECO:0007669"/>
    <property type="project" value="UniProtKB-KW"/>
</dbReference>
<dbReference type="GO" id="GO:0016887">
    <property type="term" value="F:ATP hydrolysis activity"/>
    <property type="evidence" value="ECO:0007669"/>
    <property type="project" value="InterPro"/>
</dbReference>
<dbReference type="FunFam" id="1.10.8.1070:FF:000001">
    <property type="entry name" value="Ribulose bisphosphate carboxylase/oxygenase activase, chloroplastic"/>
    <property type="match status" value="1"/>
</dbReference>
<dbReference type="FunFam" id="3.40.50.300:FF:000258">
    <property type="entry name" value="Ribulose bisphosphate carboxylase/oxygenase activase, chloroplastic"/>
    <property type="match status" value="1"/>
</dbReference>
<dbReference type="Gene3D" id="1.10.8.1070">
    <property type="match status" value="1"/>
</dbReference>
<dbReference type="Gene3D" id="3.40.50.300">
    <property type="entry name" value="P-loop containing nucleotide triphosphate hydrolases"/>
    <property type="match status" value="1"/>
</dbReference>
<dbReference type="InterPro" id="IPR003959">
    <property type="entry name" value="ATPase_AAA_core"/>
</dbReference>
<dbReference type="InterPro" id="IPR027417">
    <property type="entry name" value="P-loop_NTPase"/>
</dbReference>
<dbReference type="InterPro" id="IPR044960">
    <property type="entry name" value="RCA-like"/>
</dbReference>
<dbReference type="InterPro" id="IPR048571">
    <property type="entry name" value="RuBisCO_activase_AAA_helical"/>
</dbReference>
<dbReference type="PANTHER" id="PTHR32429">
    <property type="match status" value="1"/>
</dbReference>
<dbReference type="PANTHER" id="PTHR32429:SF32">
    <property type="entry name" value="RIBULOSE BISPHOSPHATE CARBOXYLASE_OXYGENASE ACTIVASE, CHLOROPLASTIC"/>
    <property type="match status" value="1"/>
</dbReference>
<dbReference type="Pfam" id="PF00004">
    <property type="entry name" value="AAA"/>
    <property type="match status" value="1"/>
</dbReference>
<dbReference type="Pfam" id="PF21228">
    <property type="entry name" value="RuBisCO_activase_AAA_helical"/>
    <property type="match status" value="1"/>
</dbReference>
<dbReference type="SUPFAM" id="SSF52540">
    <property type="entry name" value="P-loop containing nucleoside triphosphate hydrolases"/>
    <property type="match status" value="1"/>
</dbReference>
<protein>
    <recommendedName>
        <fullName>Ribulose bisphosphate carboxylase/oxygenase activase, chloroplastic</fullName>
        <shortName>RA</shortName>
        <shortName>RuBisCO activase</shortName>
    </recommendedName>
</protein>
<proteinExistence type="evidence at transcript level"/>
<comment type="function">
    <text>Activation of RuBisCO (ribulose-1,5-bisphosphate carboxylase/oxygenase; EC 4.1.1.39) involves the ATP-dependent carboxylation of the epsilon-amino group of lysine leading to a carbamate structure.</text>
</comment>
<comment type="subunit">
    <text>Monomer.</text>
</comment>
<comment type="subcellular location">
    <subcellularLocation>
        <location>Plastid</location>
        <location>Chloroplast stroma</location>
    </subcellularLocation>
</comment>
<comment type="similarity">
    <text evidence="2">Belongs to the RuBisCO activase family.</text>
</comment>
<sequence>MQVTMKSSAVSGQRVGGARVATRSVRRAQLQVVAPSRKQMGRWRSIDAGVDASDDQQDITRGREMVDDLFQGGFGAGGTHNAVLSSQEYLSQSRASFNNIEDGFYISPAFLDKMTIHIAKNFMDLPKIKVPLILGIWGGKGQGKTFQCALAYKKLGIAPIVMSAGELESGNAGEPAKLIRTRYREASDIIKKGRMCSLFINDLDAGAGRMGDTTQYTVNNQMVNATLMNIADNPTNVQLPGVYKNEEIPRVPIVCTGNDFSTLYAPLIRDGRMEKYYWNPTREDRIGVCMGIFQEDNVQRREVENLVDTFPGQSIDFFGALRARVYDDMVRQWITDTGVDKIGQQLVNARQKVAMPKVSMDLNVLIKYGKSLVDEQENVKRVQLADAYLSGAELAGHGGSSLPEAYSR</sequence>
<accession>P23489</accession>
<reference key="1">
    <citation type="journal article" date="1990" name="Plant Physiol.">
        <title>Primary structure of Chlamydomonas reinhardtii ribulose 1,5-bisphosphate carboxylase/oxygenase activase and evidence for a single polypeptide.</title>
        <authorList>
            <person name="Roesler K.R."/>
            <person name="Ogren W.L."/>
        </authorList>
    </citation>
    <scope>NUCLEOTIDE SEQUENCE [MRNA]</scope>
    <source>
        <strain>137c / CC-125</strain>
    </source>
</reference>
<feature type="transit peptide" description="Chloroplast" evidence="1">
    <location>
        <begin position="1"/>
        <end position="32"/>
    </location>
</feature>
<feature type="chain" id="PRO_0000030229" description="Ribulose bisphosphate carboxylase/oxygenase activase, chloroplastic">
    <location>
        <begin position="33"/>
        <end position="408"/>
    </location>
</feature>
<feature type="binding site" evidence="1">
    <location>
        <begin position="138"/>
        <end position="145"/>
    </location>
    <ligand>
        <name>ATP</name>
        <dbReference type="ChEBI" id="CHEBI:30616"/>
    </ligand>
</feature>
<evidence type="ECO:0000255" key="1"/>
<evidence type="ECO:0000305" key="2"/>
<keyword id="KW-0067">ATP-binding</keyword>
<keyword id="KW-0150">Chloroplast</keyword>
<keyword id="KW-0547">Nucleotide-binding</keyword>
<keyword id="KW-0934">Plastid</keyword>
<keyword id="KW-0809">Transit peptide</keyword>
<organism>
    <name type="scientific">Chlamydomonas reinhardtii</name>
    <name type="common">Chlamydomonas smithii</name>
    <dbReference type="NCBI Taxonomy" id="3055"/>
    <lineage>
        <taxon>Eukaryota</taxon>
        <taxon>Viridiplantae</taxon>
        <taxon>Chlorophyta</taxon>
        <taxon>core chlorophytes</taxon>
        <taxon>Chlorophyceae</taxon>
        <taxon>CS clade</taxon>
        <taxon>Chlamydomonadales</taxon>
        <taxon>Chlamydomonadaceae</taxon>
        <taxon>Chlamydomonas</taxon>
    </lineage>
</organism>